<organism>
    <name type="scientific">Meyerozyma guilliermondii (strain ATCC 6260 / CBS 566 / DSM 6381 / JCM 1539 / NBRC 10279 / NRRL Y-324)</name>
    <name type="common">Yeast</name>
    <name type="synonym">Candida guilliermondii</name>
    <dbReference type="NCBI Taxonomy" id="294746"/>
    <lineage>
        <taxon>Eukaryota</taxon>
        <taxon>Fungi</taxon>
        <taxon>Dikarya</taxon>
        <taxon>Ascomycota</taxon>
        <taxon>Saccharomycotina</taxon>
        <taxon>Pichiomycetes</taxon>
        <taxon>Debaryomycetaceae</taxon>
        <taxon>Meyerozyma</taxon>
    </lineage>
</organism>
<dbReference type="EC" id="3.6.4.13"/>
<dbReference type="EMBL" id="CH408156">
    <property type="protein sequence ID" value="EDK37283.2"/>
    <property type="status" value="ALT_SEQ"/>
    <property type="molecule type" value="Genomic_DNA"/>
</dbReference>
<dbReference type="RefSeq" id="XP_001485710.1">
    <property type="nucleotide sequence ID" value="XM_001485660.1"/>
</dbReference>
<dbReference type="SMR" id="A5DDN0"/>
<dbReference type="FunCoup" id="A5DDN0">
    <property type="interactions" value="1236"/>
</dbReference>
<dbReference type="STRING" id="294746.A5DDN0"/>
<dbReference type="GeneID" id="5128262"/>
<dbReference type="KEGG" id="pgu:PGUG_01381"/>
<dbReference type="eggNOG" id="KOG0329">
    <property type="taxonomic scope" value="Eukaryota"/>
</dbReference>
<dbReference type="HOGENOM" id="CLU_003041_1_0_1"/>
<dbReference type="InParanoid" id="A5DDN0"/>
<dbReference type="OrthoDB" id="10265785at2759"/>
<dbReference type="Proteomes" id="UP000001997">
    <property type="component" value="Unassembled WGS sequence"/>
</dbReference>
<dbReference type="GO" id="GO:0005681">
    <property type="term" value="C:spliceosomal complex"/>
    <property type="evidence" value="ECO:0007669"/>
    <property type="project" value="UniProtKB-KW"/>
</dbReference>
<dbReference type="GO" id="GO:0005524">
    <property type="term" value="F:ATP binding"/>
    <property type="evidence" value="ECO:0007669"/>
    <property type="project" value="UniProtKB-KW"/>
</dbReference>
<dbReference type="GO" id="GO:0016887">
    <property type="term" value="F:ATP hydrolysis activity"/>
    <property type="evidence" value="ECO:0007669"/>
    <property type="project" value="RHEA"/>
</dbReference>
<dbReference type="GO" id="GO:0003723">
    <property type="term" value="F:RNA binding"/>
    <property type="evidence" value="ECO:0007669"/>
    <property type="project" value="UniProtKB-KW"/>
</dbReference>
<dbReference type="GO" id="GO:0003724">
    <property type="term" value="F:RNA helicase activity"/>
    <property type="evidence" value="ECO:0007669"/>
    <property type="project" value="UniProtKB-EC"/>
</dbReference>
<dbReference type="GO" id="GO:0006397">
    <property type="term" value="P:mRNA processing"/>
    <property type="evidence" value="ECO:0007669"/>
    <property type="project" value="UniProtKB-KW"/>
</dbReference>
<dbReference type="GO" id="GO:0051028">
    <property type="term" value="P:mRNA transport"/>
    <property type="evidence" value="ECO:0007669"/>
    <property type="project" value="UniProtKB-KW"/>
</dbReference>
<dbReference type="GO" id="GO:0008380">
    <property type="term" value="P:RNA splicing"/>
    <property type="evidence" value="ECO:0007669"/>
    <property type="project" value="UniProtKB-KW"/>
</dbReference>
<dbReference type="CDD" id="cd17950">
    <property type="entry name" value="DEADc_DDX39"/>
    <property type="match status" value="1"/>
</dbReference>
<dbReference type="CDD" id="cd18787">
    <property type="entry name" value="SF2_C_DEAD"/>
    <property type="match status" value="1"/>
</dbReference>
<dbReference type="FunFam" id="3.40.50.300:FF:000809">
    <property type="entry name" value="ATP-dependent RNA helicase SUB2"/>
    <property type="match status" value="1"/>
</dbReference>
<dbReference type="FunFam" id="3.40.50.300:FF:000111">
    <property type="entry name" value="DEAD-box ATP-dependent RNA helicase"/>
    <property type="match status" value="1"/>
</dbReference>
<dbReference type="Gene3D" id="3.40.50.300">
    <property type="entry name" value="P-loop containing nucleotide triphosphate hydrolases"/>
    <property type="match status" value="2"/>
</dbReference>
<dbReference type="InterPro" id="IPR011545">
    <property type="entry name" value="DEAD/DEAH_box_helicase_dom"/>
</dbReference>
<dbReference type="InterPro" id="IPR014001">
    <property type="entry name" value="Helicase_ATP-bd"/>
</dbReference>
<dbReference type="InterPro" id="IPR001650">
    <property type="entry name" value="Helicase_C-like"/>
</dbReference>
<dbReference type="InterPro" id="IPR027417">
    <property type="entry name" value="P-loop_NTPase"/>
</dbReference>
<dbReference type="InterPro" id="IPR014014">
    <property type="entry name" value="RNA_helicase_DEAD_Q_motif"/>
</dbReference>
<dbReference type="PANTHER" id="PTHR47958">
    <property type="entry name" value="ATP-DEPENDENT RNA HELICASE DBP3"/>
    <property type="match status" value="1"/>
</dbReference>
<dbReference type="Pfam" id="PF00270">
    <property type="entry name" value="DEAD"/>
    <property type="match status" value="1"/>
</dbReference>
<dbReference type="Pfam" id="PF00271">
    <property type="entry name" value="Helicase_C"/>
    <property type="match status" value="1"/>
</dbReference>
<dbReference type="SMART" id="SM00487">
    <property type="entry name" value="DEXDc"/>
    <property type="match status" value="1"/>
</dbReference>
<dbReference type="SMART" id="SM00490">
    <property type="entry name" value="HELICc"/>
    <property type="match status" value="1"/>
</dbReference>
<dbReference type="SUPFAM" id="SSF52540">
    <property type="entry name" value="P-loop containing nucleoside triphosphate hydrolases"/>
    <property type="match status" value="1"/>
</dbReference>
<dbReference type="PROSITE" id="PS51192">
    <property type="entry name" value="HELICASE_ATP_BIND_1"/>
    <property type="match status" value="1"/>
</dbReference>
<dbReference type="PROSITE" id="PS51194">
    <property type="entry name" value="HELICASE_CTER"/>
    <property type="match status" value="1"/>
</dbReference>
<dbReference type="PROSITE" id="PS51195">
    <property type="entry name" value="Q_MOTIF"/>
    <property type="match status" value="1"/>
</dbReference>
<sequence>MSAEGQEELLDYSDSEEIAVPSNAPEAGADGADKDADKKGSYVGIHATGFRDFLLKPELLRAIGDCGFEHPSEVQQVCIPQSILGTDVLCQAKSGLGKTAVFVLSTLQQLDPVPGEITTLVICHTRELAYQIRNEYARFSKYMPDVKTEVFYGGIPIAKDIEKLKNKDTCPHIVVATPGRLHALVEEKAIRLNNVKSFVIDECDKVLEAIDMRRDVQDIFRNTPHQKQVMMFSATLSQEIRPVCKKFMQNPLEIYVDDEAKLTLHGLQQYYLKLDEKEKNRKLADLLDSLEFNQVIIFVKSTSRANELNKLLVASNFPSIAVHSAMPQEERIARYKSFKEFNKRICVSTDVFGRGIDIERINLAINYDLPNEADQYLHRVGRAGRFGTKGLAISFVGSKEDEEVLEKIQSRFDVKITEFPEEGVDSSTYMNT</sequence>
<gene>
    <name type="primary">SUB2</name>
    <name type="ORF">PGUG_01381</name>
</gene>
<keyword id="KW-0067">ATP-binding</keyword>
<keyword id="KW-0347">Helicase</keyword>
<keyword id="KW-0378">Hydrolase</keyword>
<keyword id="KW-0507">mRNA processing</keyword>
<keyword id="KW-0508">mRNA splicing</keyword>
<keyword id="KW-0509">mRNA transport</keyword>
<keyword id="KW-0547">Nucleotide-binding</keyword>
<keyword id="KW-0539">Nucleus</keyword>
<keyword id="KW-1185">Reference proteome</keyword>
<keyword id="KW-0694">RNA-binding</keyword>
<keyword id="KW-0747">Spliceosome</keyword>
<keyword id="KW-0813">Transport</keyword>
<reference key="1">
    <citation type="journal article" date="2009" name="Nature">
        <title>Evolution of pathogenicity and sexual reproduction in eight Candida genomes.</title>
        <authorList>
            <person name="Butler G."/>
            <person name="Rasmussen M.D."/>
            <person name="Lin M.F."/>
            <person name="Santos M.A.S."/>
            <person name="Sakthikumar S."/>
            <person name="Munro C.A."/>
            <person name="Rheinbay E."/>
            <person name="Grabherr M."/>
            <person name="Forche A."/>
            <person name="Reedy J.L."/>
            <person name="Agrafioti I."/>
            <person name="Arnaud M.B."/>
            <person name="Bates S."/>
            <person name="Brown A.J.P."/>
            <person name="Brunke S."/>
            <person name="Costanzo M.C."/>
            <person name="Fitzpatrick D.A."/>
            <person name="de Groot P.W.J."/>
            <person name="Harris D."/>
            <person name="Hoyer L.L."/>
            <person name="Hube B."/>
            <person name="Klis F.M."/>
            <person name="Kodira C."/>
            <person name="Lennard N."/>
            <person name="Logue M.E."/>
            <person name="Martin R."/>
            <person name="Neiman A.M."/>
            <person name="Nikolaou E."/>
            <person name="Quail M.A."/>
            <person name="Quinn J."/>
            <person name="Santos M.C."/>
            <person name="Schmitzberger F.F."/>
            <person name="Sherlock G."/>
            <person name="Shah P."/>
            <person name="Silverstein K.A.T."/>
            <person name="Skrzypek M.S."/>
            <person name="Soll D."/>
            <person name="Staggs R."/>
            <person name="Stansfield I."/>
            <person name="Stumpf M.P.H."/>
            <person name="Sudbery P.E."/>
            <person name="Srikantha T."/>
            <person name="Zeng Q."/>
            <person name="Berman J."/>
            <person name="Berriman M."/>
            <person name="Heitman J."/>
            <person name="Gow N.A.R."/>
            <person name="Lorenz M.C."/>
            <person name="Birren B.W."/>
            <person name="Kellis M."/>
            <person name="Cuomo C.A."/>
        </authorList>
    </citation>
    <scope>NUCLEOTIDE SEQUENCE [LARGE SCALE GENOMIC DNA]</scope>
    <source>
        <strain>ATCC 6260 / CBS 566 / DSM 6381 / JCM 1539 / NBRC 10279 / NRRL Y-324</strain>
    </source>
</reference>
<proteinExistence type="inferred from homology"/>
<evidence type="ECO:0000250" key="1"/>
<evidence type="ECO:0000255" key="2">
    <source>
        <dbReference type="PROSITE-ProRule" id="PRU00541"/>
    </source>
</evidence>
<evidence type="ECO:0000255" key="3">
    <source>
        <dbReference type="PROSITE-ProRule" id="PRU00542"/>
    </source>
</evidence>
<evidence type="ECO:0000256" key="4">
    <source>
        <dbReference type="SAM" id="MobiDB-lite"/>
    </source>
</evidence>
<evidence type="ECO:0000305" key="5"/>
<accession>A5DDN0</accession>
<protein>
    <recommendedName>
        <fullName>ATP-dependent RNA helicase SUB2</fullName>
        <ecNumber>3.6.4.13</ecNumber>
    </recommendedName>
</protein>
<feature type="chain" id="PRO_0000294647" description="ATP-dependent RNA helicase SUB2">
    <location>
        <begin position="1"/>
        <end position="432"/>
    </location>
</feature>
<feature type="domain" description="Helicase ATP-binding" evidence="2">
    <location>
        <begin position="79"/>
        <end position="254"/>
    </location>
</feature>
<feature type="domain" description="Helicase C-terminal" evidence="3">
    <location>
        <begin position="266"/>
        <end position="427"/>
    </location>
</feature>
<feature type="region of interest" description="Disordered" evidence="4">
    <location>
        <begin position="1"/>
        <end position="35"/>
    </location>
</feature>
<feature type="short sequence motif" description="Q motif">
    <location>
        <begin position="48"/>
        <end position="76"/>
    </location>
</feature>
<feature type="short sequence motif" description="DEAD box">
    <location>
        <begin position="201"/>
        <end position="204"/>
    </location>
</feature>
<feature type="compositionally biased region" description="Acidic residues" evidence="4">
    <location>
        <begin position="1"/>
        <end position="17"/>
    </location>
</feature>
<feature type="binding site" evidence="2">
    <location>
        <begin position="92"/>
        <end position="99"/>
    </location>
    <ligand>
        <name>ATP</name>
        <dbReference type="ChEBI" id="CHEBI:30616"/>
    </ligand>
</feature>
<name>SUB2_PICGU</name>
<comment type="function">
    <text evidence="1">ATP-binding RNA helicase involved in transcription elongation and required for the export of mRNA out of the nucleus. SUB2 also plays a role in pre-mRNA splicing and spliceosome assembly. May be involved in rDNA and telomeric silencing, and maintenance of genome integrity (By similarity).</text>
</comment>
<comment type="catalytic activity">
    <reaction>
        <text>ATP + H2O = ADP + phosphate + H(+)</text>
        <dbReference type="Rhea" id="RHEA:13065"/>
        <dbReference type="ChEBI" id="CHEBI:15377"/>
        <dbReference type="ChEBI" id="CHEBI:15378"/>
        <dbReference type="ChEBI" id="CHEBI:30616"/>
        <dbReference type="ChEBI" id="CHEBI:43474"/>
        <dbReference type="ChEBI" id="CHEBI:456216"/>
        <dbReference type="EC" id="3.6.4.13"/>
    </reaction>
</comment>
<comment type="subcellular location">
    <subcellularLocation>
        <location evidence="1">Nucleus</location>
    </subcellularLocation>
</comment>
<comment type="domain">
    <text>The Q motif is unique to and characteristic of the DEAD box family of RNA helicases and controls ATP binding and hydrolysis.</text>
</comment>
<comment type="similarity">
    <text evidence="5">Belongs to the DEAD box helicase family. DECD subfamily.</text>
</comment>
<comment type="sequence caution" evidence="5">
    <conflict type="erroneous gene model prediction">
        <sequence resource="EMBL-CDS" id="EDK37283"/>
    </conflict>
</comment>